<feature type="signal peptide" evidence="2">
    <location>
        <begin position="1"/>
        <end position="23"/>
    </location>
</feature>
<feature type="chain" id="PRO_0000042716" description="Ribonuclease T2-like">
    <location>
        <begin position="24"/>
        <end position="292"/>
    </location>
</feature>
<feature type="active site" evidence="3">
    <location>
        <position position="96"/>
    </location>
</feature>
<feature type="active site" evidence="3">
    <location>
        <position position="162"/>
    </location>
</feature>
<feature type="active site" evidence="3">
    <location>
        <position position="166"/>
    </location>
</feature>
<feature type="glycosylation site" description="N-linked (GlcNAc...) asparagine" evidence="2">
    <location>
        <position position="52"/>
    </location>
</feature>
<feature type="disulfide bond" evidence="1">
    <location>
        <begin position="42"/>
        <end position="61"/>
    </location>
</feature>
<feature type="disulfide bond" evidence="1">
    <location>
        <begin position="50"/>
        <end position="103"/>
    </location>
</feature>
<feature type="disulfide bond" evidence="1">
    <location>
        <begin position="60"/>
        <end position="177"/>
    </location>
</feature>
<feature type="disulfide bond" evidence="1">
    <location>
        <begin position="111"/>
        <end position="169"/>
    </location>
</feature>
<feature type="disulfide bond" evidence="1">
    <location>
        <begin position="246"/>
        <end position="280"/>
    </location>
</feature>
<protein>
    <recommendedName>
        <fullName>Ribonuclease T2-like</fullName>
        <shortName>RNase T2-like</shortName>
        <ecNumber>4.6.1.19</ecNumber>
    </recommendedName>
</protein>
<gene>
    <name type="primary">RNY1</name>
    <name type="ordered locus">ACR156W</name>
</gene>
<keyword id="KW-0963">Cytoplasm</keyword>
<keyword id="KW-1015">Disulfide bond</keyword>
<keyword id="KW-0255">Endonuclease</keyword>
<keyword id="KW-0325">Glycoprotein</keyword>
<keyword id="KW-0378">Hydrolase</keyword>
<keyword id="KW-0456">Lyase</keyword>
<keyword id="KW-0540">Nuclease</keyword>
<keyword id="KW-1185">Reference proteome</keyword>
<keyword id="KW-0732">Signal</keyword>
<keyword id="KW-0926">Vacuole</keyword>
<reference key="1">
    <citation type="journal article" date="2004" name="Science">
        <title>The Ashbya gossypii genome as a tool for mapping the ancient Saccharomyces cerevisiae genome.</title>
        <authorList>
            <person name="Dietrich F.S."/>
            <person name="Voegeli S."/>
            <person name="Brachat S."/>
            <person name="Lerch A."/>
            <person name="Gates K."/>
            <person name="Steiner S."/>
            <person name="Mohr C."/>
            <person name="Poehlmann R."/>
            <person name="Luedi P."/>
            <person name="Choi S."/>
            <person name="Wing R.A."/>
            <person name="Flavier A."/>
            <person name="Gaffney T.D."/>
            <person name="Philippsen P."/>
        </authorList>
    </citation>
    <scope>NUCLEOTIDE SEQUENCE [LARGE SCALE GENOMIC DNA]</scope>
    <source>
        <strain>ATCC 10895 / CBS 109.51 / FGSC 9923 / NRRL Y-1056</strain>
    </source>
</reference>
<reference key="2">
    <citation type="journal article" date="2013" name="G3 (Bethesda)">
        <title>Genomes of Ashbya fungi isolated from insects reveal four mating-type loci, numerous translocations, lack of transposons, and distinct gene duplications.</title>
        <authorList>
            <person name="Dietrich F.S."/>
            <person name="Voegeli S."/>
            <person name="Kuo S."/>
            <person name="Philippsen P."/>
        </authorList>
    </citation>
    <scope>GENOME REANNOTATION</scope>
    <source>
        <strain>ATCC 10895 / CBS 109.51 / FGSC 9923 / NRRL Y-1056</strain>
    </source>
</reference>
<comment type="function">
    <text evidence="1">Rnase which modulates cell survival under stress conditions. Released from the vacuole to the cytoplasm during stress to promote tRNA and rRNA cleavage and to activate separately a downstream pathway that promotes cell death. Involved in cell size, vacuolar morphology and growth at high temperatures and high salt concentration (By similarity).</text>
</comment>
<comment type="catalytic activity">
    <reaction evidence="3">
        <text>a ribonucleotidyl-ribonucleotide-RNA + H2O = a 3'-end 3'-phospho-ribonucleotide-RNA + a 5'-end dephospho-ribonucleoside-RNA + H(+)</text>
        <dbReference type="Rhea" id="RHEA:68052"/>
        <dbReference type="Rhea" id="RHEA-COMP:10463"/>
        <dbReference type="Rhea" id="RHEA-COMP:13936"/>
        <dbReference type="Rhea" id="RHEA-COMP:17355"/>
        <dbReference type="ChEBI" id="CHEBI:15377"/>
        <dbReference type="ChEBI" id="CHEBI:15378"/>
        <dbReference type="ChEBI" id="CHEBI:83062"/>
        <dbReference type="ChEBI" id="CHEBI:138284"/>
        <dbReference type="ChEBI" id="CHEBI:173118"/>
        <dbReference type="EC" id="4.6.1.19"/>
    </reaction>
</comment>
<comment type="subcellular location">
    <subcellularLocation>
        <location>Vacuole lumen</location>
    </subcellularLocation>
    <subcellularLocation>
        <location>Cytoplasm</location>
    </subcellularLocation>
    <text evidence="1">Is released from the vacuole to the cytoplasm during stress conditions like oxidative stress or stationary phase stress.</text>
</comment>
<comment type="similarity">
    <text evidence="4">Belongs to the RNase T2 family.</text>
</comment>
<organism>
    <name type="scientific">Eremothecium gossypii (strain ATCC 10895 / CBS 109.51 / FGSC 9923 / NRRL Y-1056)</name>
    <name type="common">Yeast</name>
    <name type="synonym">Ashbya gossypii</name>
    <dbReference type="NCBI Taxonomy" id="284811"/>
    <lineage>
        <taxon>Eukaryota</taxon>
        <taxon>Fungi</taxon>
        <taxon>Dikarya</taxon>
        <taxon>Ascomycota</taxon>
        <taxon>Saccharomycotina</taxon>
        <taxon>Saccharomycetes</taxon>
        <taxon>Saccharomycetales</taxon>
        <taxon>Saccharomycetaceae</taxon>
        <taxon>Eremothecium</taxon>
    </lineage>
</organism>
<evidence type="ECO:0000250" key="1"/>
<evidence type="ECO:0000255" key="2"/>
<evidence type="ECO:0000255" key="3">
    <source>
        <dbReference type="PROSITE-ProRule" id="PRU10046"/>
    </source>
</evidence>
<evidence type="ECO:0000305" key="4"/>
<proteinExistence type="inferred from homology"/>
<accession>Q75BW5</accession>
<sequence length="292" mass="33434">MAKTASAMLFLYLLLSRCLLSHAFQEFITKFPMPMMYNFPSCSSTIPSTCRNETAIADTCCFEYPGGLILHSQFWNAPYRKRSYRDFGPDDSFTIHGLWNDRCDGSWDQFCRRGSSIRSVVDILSKDSLNRGGLPITGKALLRQMSMYWKGDRGDENLWVHEYNKHGLCLNTLRPECYQRWGSVASAEDQAIYDYFRIAMNLHLKIDAYHALSRQGIKPRCDAPYDAVRMQNALADDFGREVQMQCTGNRLTGVTYYYLLRGGILSENFQPVDPTQSSSCRGKIYWIPKSGC</sequence>
<name>RNY1_EREGS</name>
<dbReference type="EC" id="4.6.1.19"/>
<dbReference type="EMBL" id="AE016816">
    <property type="protein sequence ID" value="AAS51382.1"/>
    <property type="molecule type" value="Genomic_DNA"/>
</dbReference>
<dbReference type="RefSeq" id="NP_983558.1">
    <property type="nucleotide sequence ID" value="NM_208911.1"/>
</dbReference>
<dbReference type="SMR" id="Q75BW5"/>
<dbReference type="FunCoup" id="Q75BW5">
    <property type="interactions" value="152"/>
</dbReference>
<dbReference type="STRING" id="284811.Q75BW5"/>
<dbReference type="GlyCosmos" id="Q75BW5">
    <property type="glycosylation" value="1 site, No reported glycans"/>
</dbReference>
<dbReference type="EnsemblFungi" id="AAS51382">
    <property type="protein sequence ID" value="AAS51382"/>
    <property type="gene ID" value="AGOS_ACR156W"/>
</dbReference>
<dbReference type="GeneID" id="4619690"/>
<dbReference type="KEGG" id="ago:AGOS_ACR156W"/>
<dbReference type="eggNOG" id="KOG1642">
    <property type="taxonomic scope" value="Eukaryota"/>
</dbReference>
<dbReference type="HOGENOM" id="CLU_037966_1_0_1"/>
<dbReference type="InParanoid" id="Q75BW5"/>
<dbReference type="OMA" id="WPIHNDG"/>
<dbReference type="OrthoDB" id="435754at2759"/>
<dbReference type="Proteomes" id="UP000000591">
    <property type="component" value="Chromosome III"/>
</dbReference>
<dbReference type="GO" id="GO:0005829">
    <property type="term" value="C:cytosol"/>
    <property type="evidence" value="ECO:0007669"/>
    <property type="project" value="EnsemblFungi"/>
</dbReference>
<dbReference type="GO" id="GO:0005576">
    <property type="term" value="C:extracellular region"/>
    <property type="evidence" value="ECO:0000318"/>
    <property type="project" value="GO_Central"/>
</dbReference>
<dbReference type="GO" id="GO:0000324">
    <property type="term" value="C:fungal-type vacuole"/>
    <property type="evidence" value="ECO:0007669"/>
    <property type="project" value="EnsemblFungi"/>
</dbReference>
<dbReference type="GO" id="GO:0005775">
    <property type="term" value="C:vacuolar lumen"/>
    <property type="evidence" value="ECO:0007669"/>
    <property type="project" value="UniProtKB-SubCell"/>
</dbReference>
<dbReference type="GO" id="GO:0033897">
    <property type="term" value="F:ribonuclease T2 activity"/>
    <property type="evidence" value="ECO:0007669"/>
    <property type="project" value="UniProtKB-EC"/>
</dbReference>
<dbReference type="GO" id="GO:0003723">
    <property type="term" value="F:RNA binding"/>
    <property type="evidence" value="ECO:0007669"/>
    <property type="project" value="InterPro"/>
</dbReference>
<dbReference type="GO" id="GO:0004521">
    <property type="term" value="F:RNA endonuclease activity"/>
    <property type="evidence" value="ECO:0000318"/>
    <property type="project" value="GO_Central"/>
</dbReference>
<dbReference type="GO" id="GO:0006915">
    <property type="term" value="P:apoptotic process"/>
    <property type="evidence" value="ECO:0007669"/>
    <property type="project" value="EnsemblFungi"/>
</dbReference>
<dbReference type="GO" id="GO:0000902">
    <property type="term" value="P:cell morphogenesis"/>
    <property type="evidence" value="ECO:0007669"/>
    <property type="project" value="EnsemblFungi"/>
</dbReference>
<dbReference type="GO" id="GO:0006402">
    <property type="term" value="P:mRNA catabolic process"/>
    <property type="evidence" value="ECO:0007669"/>
    <property type="project" value="EnsemblFungi"/>
</dbReference>
<dbReference type="GO" id="GO:0006401">
    <property type="term" value="P:RNA catabolic process"/>
    <property type="evidence" value="ECO:0000318"/>
    <property type="project" value="GO_Central"/>
</dbReference>
<dbReference type="CDD" id="cd01061">
    <property type="entry name" value="RNase_T2_euk"/>
    <property type="match status" value="1"/>
</dbReference>
<dbReference type="FunFam" id="3.90.730.10:FF:000004">
    <property type="entry name" value="Ribonuclease T2-like"/>
    <property type="match status" value="1"/>
</dbReference>
<dbReference type="Gene3D" id="3.90.730.10">
    <property type="entry name" value="Ribonuclease T2-like"/>
    <property type="match status" value="1"/>
</dbReference>
<dbReference type="InterPro" id="IPR033697">
    <property type="entry name" value="Ribonuclease_T2_eukaryotic"/>
</dbReference>
<dbReference type="InterPro" id="IPR001568">
    <property type="entry name" value="RNase_T2-like"/>
</dbReference>
<dbReference type="InterPro" id="IPR036430">
    <property type="entry name" value="RNase_T2-like_sf"/>
</dbReference>
<dbReference type="InterPro" id="IPR033130">
    <property type="entry name" value="RNase_T2_His_AS_2"/>
</dbReference>
<dbReference type="PANTHER" id="PTHR11240">
    <property type="entry name" value="RIBONUCLEASE T2"/>
    <property type="match status" value="1"/>
</dbReference>
<dbReference type="PANTHER" id="PTHR11240:SF22">
    <property type="entry name" value="RIBONUCLEASE T2"/>
    <property type="match status" value="1"/>
</dbReference>
<dbReference type="Pfam" id="PF00445">
    <property type="entry name" value="Ribonuclease_T2"/>
    <property type="match status" value="1"/>
</dbReference>
<dbReference type="SUPFAM" id="SSF55895">
    <property type="entry name" value="Ribonuclease Rh-like"/>
    <property type="match status" value="1"/>
</dbReference>
<dbReference type="PROSITE" id="PS00531">
    <property type="entry name" value="RNASE_T2_2"/>
    <property type="match status" value="1"/>
</dbReference>